<dbReference type="EC" id="4.1.1.50" evidence="1"/>
<dbReference type="EMBL" id="CP001396">
    <property type="protein sequence ID" value="ACR65506.1"/>
    <property type="molecule type" value="Genomic_DNA"/>
</dbReference>
<dbReference type="RefSeq" id="WP_000734287.1">
    <property type="nucleotide sequence ID" value="NC_012759.1"/>
</dbReference>
<dbReference type="GeneID" id="93777316"/>
<dbReference type="KEGG" id="ebw:BWG_0113"/>
<dbReference type="HOGENOM" id="CLU_092007_0_0_6"/>
<dbReference type="UniPathway" id="UPA00331">
    <property type="reaction ID" value="UER00451"/>
</dbReference>
<dbReference type="GO" id="GO:0005829">
    <property type="term" value="C:cytosol"/>
    <property type="evidence" value="ECO:0007669"/>
    <property type="project" value="TreeGrafter"/>
</dbReference>
<dbReference type="GO" id="GO:0004014">
    <property type="term" value="F:adenosylmethionine decarboxylase activity"/>
    <property type="evidence" value="ECO:0007669"/>
    <property type="project" value="UniProtKB-UniRule"/>
</dbReference>
<dbReference type="GO" id="GO:0008295">
    <property type="term" value="P:spermidine biosynthetic process"/>
    <property type="evidence" value="ECO:0007669"/>
    <property type="project" value="UniProtKB-UniRule"/>
</dbReference>
<dbReference type="FunFam" id="3.60.90.10:FF:000001">
    <property type="entry name" value="S-adenosylmethionine decarboxylase proenzyme"/>
    <property type="match status" value="1"/>
</dbReference>
<dbReference type="Gene3D" id="3.60.90.10">
    <property type="entry name" value="S-adenosylmethionine decarboxylase"/>
    <property type="match status" value="1"/>
</dbReference>
<dbReference type="HAMAP" id="MF_00465">
    <property type="entry name" value="AdoMetDC_2"/>
    <property type="match status" value="1"/>
</dbReference>
<dbReference type="InterPro" id="IPR003826">
    <property type="entry name" value="AdoMetDC_fam_prok"/>
</dbReference>
<dbReference type="InterPro" id="IPR009165">
    <property type="entry name" value="S-AdoMet_deCO2ase_bac"/>
</dbReference>
<dbReference type="InterPro" id="IPR016067">
    <property type="entry name" value="S-AdoMet_deCO2ase_core"/>
</dbReference>
<dbReference type="NCBIfam" id="TIGR03331">
    <property type="entry name" value="SAM_DCase_Eco"/>
    <property type="match status" value="1"/>
</dbReference>
<dbReference type="PANTHER" id="PTHR33866">
    <property type="entry name" value="S-ADENOSYLMETHIONINE DECARBOXYLASE PROENZYME"/>
    <property type="match status" value="1"/>
</dbReference>
<dbReference type="PANTHER" id="PTHR33866:SF1">
    <property type="entry name" value="S-ADENOSYLMETHIONINE DECARBOXYLASE PROENZYME"/>
    <property type="match status" value="1"/>
</dbReference>
<dbReference type="Pfam" id="PF02675">
    <property type="entry name" value="AdoMet_dc"/>
    <property type="match status" value="1"/>
</dbReference>
<dbReference type="PIRSF" id="PIRSF001356">
    <property type="entry name" value="SAM_decarboxylas"/>
    <property type="match status" value="1"/>
</dbReference>
<dbReference type="SUPFAM" id="SSF56276">
    <property type="entry name" value="S-adenosylmethionine decarboxylase"/>
    <property type="match status" value="1"/>
</dbReference>
<comment type="function">
    <text evidence="1">Catalyzes the decarboxylation of S-adenosylmethionine to S-adenosylmethioninamine (dcAdoMet), the propylamine donor required for the synthesis of the polyamines spermine and spermidine from the diamine putrescine.</text>
</comment>
<comment type="catalytic activity">
    <reaction evidence="1">
        <text>S-adenosyl-L-methionine + H(+) = S-adenosyl 3-(methylsulfanyl)propylamine + CO2</text>
        <dbReference type="Rhea" id="RHEA:15981"/>
        <dbReference type="ChEBI" id="CHEBI:15378"/>
        <dbReference type="ChEBI" id="CHEBI:16526"/>
        <dbReference type="ChEBI" id="CHEBI:57443"/>
        <dbReference type="ChEBI" id="CHEBI:59789"/>
        <dbReference type="EC" id="4.1.1.50"/>
    </reaction>
</comment>
<comment type="cofactor">
    <cofactor evidence="1">
        <name>pyruvate</name>
        <dbReference type="ChEBI" id="CHEBI:15361"/>
    </cofactor>
    <text evidence="1">Binds 1 pyruvoyl group covalently per subunit.</text>
</comment>
<comment type="pathway">
    <text evidence="1">Amine and polyamine biosynthesis; S-adenosylmethioninamine biosynthesis; S-adenosylmethioninamine from S-adenosyl-L-methionine: step 1/1.</text>
</comment>
<comment type="subunit">
    <text evidence="1">Heterooctamer of four alpha and four beta chains arranged as a tetramer of alpha/beta heterodimers.</text>
</comment>
<comment type="PTM">
    <text evidence="1">Is synthesized initially as an inactive proenzyme. Formation of the active enzyme involves a self-maturation process in which the active site pyruvoyl group is generated from an internal serine residue via an autocatalytic post-translational modification. Two non-identical subunits are generated from the proenzyme in this reaction, and the pyruvate is formed at the N-terminus of the alpha chain, which is derived from the carboxyl end of the proenzyme. The post-translation cleavage follows an unusual pathway, termed non-hydrolytic serinolysis, in which the side chain hydroxyl group of the serine supplies its oxygen atom to form the C-terminus of the beta chain, while the remainder of the serine residue undergoes an oxidative deamination to produce ammonia and the pyruvoyl group blocking the N-terminus of the alpha chain.</text>
</comment>
<comment type="similarity">
    <text evidence="1">Belongs to the prokaryotic AdoMetDC family. Type 2 subfamily.</text>
</comment>
<reference key="1">
    <citation type="journal article" date="2009" name="J. Bacteriol.">
        <title>Genomic sequencing reveals regulatory mutations and recombinational events in the widely used MC4100 lineage of Escherichia coli K-12.</title>
        <authorList>
            <person name="Ferenci T."/>
            <person name="Zhou Z."/>
            <person name="Betteridge T."/>
            <person name="Ren Y."/>
            <person name="Liu Y."/>
            <person name="Feng L."/>
            <person name="Reeves P.R."/>
            <person name="Wang L."/>
        </authorList>
    </citation>
    <scope>NUCLEOTIDE SEQUENCE [LARGE SCALE GENOMIC DNA]</scope>
    <source>
        <strain>K12 / MC4100 / BW2952</strain>
    </source>
</reference>
<feature type="chain" id="PRO_1000206324" description="S-adenosylmethionine decarboxylase beta chain" evidence="1">
    <location>
        <begin position="1"/>
        <end position="111"/>
    </location>
</feature>
<feature type="chain" id="PRO_1000206325" description="S-adenosylmethionine decarboxylase alpha chain" evidence="1">
    <location>
        <begin position="112"/>
        <end position="264"/>
    </location>
</feature>
<feature type="active site" description="Schiff-base intermediate with substrate; via pyruvic acid" evidence="1">
    <location>
        <position position="112"/>
    </location>
</feature>
<feature type="active site" description="Proton acceptor; for processing activity" evidence="1">
    <location>
        <position position="117"/>
    </location>
</feature>
<feature type="active site" description="Proton donor; for catalytic activity" evidence="1">
    <location>
        <position position="140"/>
    </location>
</feature>
<feature type="site" description="Cleavage (non-hydrolytic); by autolysis" evidence="1">
    <location>
        <begin position="111"/>
        <end position="112"/>
    </location>
</feature>
<feature type="modified residue" description="Pyruvic acid (Ser); by autocatalysis" evidence="1">
    <location>
        <position position="112"/>
    </location>
</feature>
<evidence type="ECO:0000255" key="1">
    <source>
        <dbReference type="HAMAP-Rule" id="MF_00465"/>
    </source>
</evidence>
<proteinExistence type="inferred from homology"/>
<gene>
    <name evidence="1" type="primary">speD</name>
    <name type="ordered locus">BWG_0113</name>
</gene>
<protein>
    <recommendedName>
        <fullName evidence="1">S-adenosylmethionine decarboxylase proenzyme</fullName>
        <shortName evidence="1">AdoMetDC</shortName>
        <shortName evidence="1">SAMDC</shortName>
        <ecNumber evidence="1">4.1.1.50</ecNumber>
    </recommendedName>
    <component>
        <recommendedName>
            <fullName evidence="1">S-adenosylmethionine decarboxylase beta chain</fullName>
        </recommendedName>
    </component>
    <component>
        <recommendedName>
            <fullName evidence="1">S-adenosylmethionine decarboxylase alpha chain</fullName>
        </recommendedName>
    </component>
</protein>
<accession>C4ZRL3</accession>
<sequence length="264" mass="30385">MKKLKLHGFNNLTKSLSFCIYDICYAKTAEERDGYIAYIDELYNANRLTEILSETCSIIGANILNIARQDYEPQGASVTILVSEEPVDPKLIDKTEHPGPLPETVVAHLDKSHICVHTYPESHPEGGLCTFRADIEVSTCGVISPLKALNYLIHQLESDIVTIDYRVRGFTRDINGMKHFIDHEINSIQNFMSDDMKALYDMVDVNVYQENIFHTKMLLKEFDLKHYMFHTKPEDLTDSERQEITAALWKEMREIYYGRNMPAV</sequence>
<keyword id="KW-0068">Autocatalytic cleavage</keyword>
<keyword id="KW-0210">Decarboxylase</keyword>
<keyword id="KW-0456">Lyase</keyword>
<keyword id="KW-0620">Polyamine biosynthesis</keyword>
<keyword id="KW-0670">Pyruvate</keyword>
<keyword id="KW-0949">S-adenosyl-L-methionine</keyword>
<keyword id="KW-0704">Schiff base</keyword>
<keyword id="KW-0745">Spermidine biosynthesis</keyword>
<keyword id="KW-0865">Zymogen</keyword>
<organism>
    <name type="scientific">Escherichia coli (strain K12 / MC4100 / BW2952)</name>
    <dbReference type="NCBI Taxonomy" id="595496"/>
    <lineage>
        <taxon>Bacteria</taxon>
        <taxon>Pseudomonadati</taxon>
        <taxon>Pseudomonadota</taxon>
        <taxon>Gammaproteobacteria</taxon>
        <taxon>Enterobacterales</taxon>
        <taxon>Enterobacteriaceae</taxon>
        <taxon>Escherichia</taxon>
    </lineage>
</organism>
<name>SPED_ECOBW</name>